<evidence type="ECO:0000255" key="1">
    <source>
        <dbReference type="HAMAP-Rule" id="MF_01139"/>
    </source>
</evidence>
<dbReference type="EC" id="2.5.1.-" evidence="1"/>
<dbReference type="EMBL" id="AP008934">
    <property type="protein sequence ID" value="BAE18653.1"/>
    <property type="molecule type" value="Genomic_DNA"/>
</dbReference>
<dbReference type="RefSeq" id="WP_011303261.1">
    <property type="nucleotide sequence ID" value="NZ_MTGA01000034.1"/>
</dbReference>
<dbReference type="SMR" id="Q49X45"/>
<dbReference type="KEGG" id="ssp:SSP1508"/>
<dbReference type="eggNOG" id="COG0020">
    <property type="taxonomic scope" value="Bacteria"/>
</dbReference>
<dbReference type="HOGENOM" id="CLU_038505_1_1_9"/>
<dbReference type="OrthoDB" id="4191603at2"/>
<dbReference type="Proteomes" id="UP000006371">
    <property type="component" value="Chromosome"/>
</dbReference>
<dbReference type="GO" id="GO:0005829">
    <property type="term" value="C:cytosol"/>
    <property type="evidence" value="ECO:0007669"/>
    <property type="project" value="TreeGrafter"/>
</dbReference>
<dbReference type="GO" id="GO:0008834">
    <property type="term" value="F:ditrans,polycis-undecaprenyl-diphosphate synthase [(2E,6E)-farnesyl-diphosphate specific] activity"/>
    <property type="evidence" value="ECO:0007669"/>
    <property type="project" value="TreeGrafter"/>
</dbReference>
<dbReference type="GO" id="GO:0000287">
    <property type="term" value="F:magnesium ion binding"/>
    <property type="evidence" value="ECO:0007669"/>
    <property type="project" value="UniProtKB-UniRule"/>
</dbReference>
<dbReference type="GO" id="GO:0030145">
    <property type="term" value="F:manganese ion binding"/>
    <property type="evidence" value="ECO:0007669"/>
    <property type="project" value="TreeGrafter"/>
</dbReference>
<dbReference type="GO" id="GO:0016094">
    <property type="term" value="P:polyprenol biosynthetic process"/>
    <property type="evidence" value="ECO:0007669"/>
    <property type="project" value="TreeGrafter"/>
</dbReference>
<dbReference type="CDD" id="cd00475">
    <property type="entry name" value="Cis_IPPS"/>
    <property type="match status" value="1"/>
</dbReference>
<dbReference type="FunFam" id="3.40.1180.10:FF:000001">
    <property type="entry name" value="(2E,6E)-farnesyl-diphosphate-specific ditrans,polycis-undecaprenyl-diphosphate synthase"/>
    <property type="match status" value="1"/>
</dbReference>
<dbReference type="Gene3D" id="3.40.1180.10">
    <property type="entry name" value="Decaprenyl diphosphate synthase-like"/>
    <property type="match status" value="1"/>
</dbReference>
<dbReference type="HAMAP" id="MF_01139">
    <property type="entry name" value="ISPT"/>
    <property type="match status" value="1"/>
</dbReference>
<dbReference type="InterPro" id="IPR001441">
    <property type="entry name" value="UPP_synth-like"/>
</dbReference>
<dbReference type="InterPro" id="IPR018520">
    <property type="entry name" value="UPP_synth-like_CS"/>
</dbReference>
<dbReference type="InterPro" id="IPR036424">
    <property type="entry name" value="UPP_synth-like_sf"/>
</dbReference>
<dbReference type="NCBIfam" id="NF011405">
    <property type="entry name" value="PRK14830.1"/>
    <property type="match status" value="1"/>
</dbReference>
<dbReference type="NCBIfam" id="TIGR00055">
    <property type="entry name" value="uppS"/>
    <property type="match status" value="1"/>
</dbReference>
<dbReference type="PANTHER" id="PTHR10291:SF0">
    <property type="entry name" value="DEHYDRODOLICHYL DIPHOSPHATE SYNTHASE 2"/>
    <property type="match status" value="1"/>
</dbReference>
<dbReference type="PANTHER" id="PTHR10291">
    <property type="entry name" value="DEHYDRODOLICHYL DIPHOSPHATE SYNTHASE FAMILY MEMBER"/>
    <property type="match status" value="1"/>
</dbReference>
<dbReference type="Pfam" id="PF01255">
    <property type="entry name" value="Prenyltransf"/>
    <property type="match status" value="1"/>
</dbReference>
<dbReference type="SUPFAM" id="SSF64005">
    <property type="entry name" value="Undecaprenyl diphosphate synthase"/>
    <property type="match status" value="1"/>
</dbReference>
<dbReference type="PROSITE" id="PS01066">
    <property type="entry name" value="UPP_SYNTHASE"/>
    <property type="match status" value="1"/>
</dbReference>
<name>ISPT_STAS1</name>
<organism>
    <name type="scientific">Staphylococcus saprophyticus subsp. saprophyticus (strain ATCC 15305 / DSM 20229 / NCIMB 8711 / NCTC 7292 / S-41)</name>
    <dbReference type="NCBI Taxonomy" id="342451"/>
    <lineage>
        <taxon>Bacteria</taxon>
        <taxon>Bacillati</taxon>
        <taxon>Bacillota</taxon>
        <taxon>Bacilli</taxon>
        <taxon>Bacillales</taxon>
        <taxon>Staphylococcaceae</taxon>
        <taxon>Staphylococcus</taxon>
    </lineage>
</organism>
<comment type="function">
    <text evidence="1">Catalyzes the condensation of isopentenyl diphosphate (IPP) with allylic pyrophosphates generating different type of terpenoids.</text>
</comment>
<comment type="cofactor">
    <cofactor evidence="1">
        <name>Mg(2+)</name>
        <dbReference type="ChEBI" id="CHEBI:18420"/>
    </cofactor>
    <text evidence="1">Binds 2 magnesium ions per subunit.</text>
</comment>
<comment type="subunit">
    <text evidence="1">Homodimer.</text>
</comment>
<comment type="similarity">
    <text evidence="1">Belongs to the UPP synthase family.</text>
</comment>
<gene>
    <name evidence="1" type="primary">uppS</name>
    <name type="ordered locus">SSP1508</name>
</gene>
<feature type="chain" id="PRO_0000123680" description="Isoprenyl transferase">
    <location>
        <begin position="1"/>
        <end position="254"/>
    </location>
</feature>
<feature type="active site" evidence="1">
    <location>
        <position position="34"/>
    </location>
</feature>
<feature type="active site" description="Proton acceptor" evidence="1">
    <location>
        <position position="82"/>
    </location>
</feature>
<feature type="binding site" evidence="1">
    <location>
        <position position="34"/>
    </location>
    <ligand>
        <name>Mg(2+)</name>
        <dbReference type="ChEBI" id="CHEBI:18420"/>
    </ligand>
</feature>
<feature type="binding site" evidence="1">
    <location>
        <begin position="35"/>
        <end position="38"/>
    </location>
    <ligand>
        <name>substrate</name>
    </ligand>
</feature>
<feature type="binding site" evidence="1">
    <location>
        <position position="39"/>
    </location>
    <ligand>
        <name>substrate</name>
    </ligand>
</feature>
<feature type="binding site" evidence="1">
    <location>
        <position position="47"/>
    </location>
    <ligand>
        <name>substrate</name>
    </ligand>
</feature>
<feature type="binding site" evidence="1">
    <location>
        <position position="51"/>
    </location>
    <ligand>
        <name>substrate</name>
    </ligand>
</feature>
<feature type="binding site" evidence="1">
    <location>
        <begin position="79"/>
        <end position="81"/>
    </location>
    <ligand>
        <name>substrate</name>
    </ligand>
</feature>
<feature type="binding site" evidence="1">
    <location>
        <position position="83"/>
    </location>
    <ligand>
        <name>substrate</name>
    </ligand>
</feature>
<feature type="binding site" evidence="1">
    <location>
        <position position="85"/>
    </location>
    <ligand>
        <name>substrate</name>
    </ligand>
</feature>
<feature type="binding site" evidence="1">
    <location>
        <position position="202"/>
    </location>
    <ligand>
        <name>substrate</name>
    </ligand>
</feature>
<feature type="binding site" evidence="1">
    <location>
        <begin position="208"/>
        <end position="210"/>
    </location>
    <ligand>
        <name>substrate</name>
    </ligand>
</feature>
<feature type="binding site" evidence="1">
    <location>
        <position position="221"/>
    </location>
    <ligand>
        <name>Mg(2+)</name>
        <dbReference type="ChEBI" id="CHEBI:18420"/>
    </ligand>
</feature>
<keyword id="KW-0460">Magnesium</keyword>
<keyword id="KW-0479">Metal-binding</keyword>
<keyword id="KW-1185">Reference proteome</keyword>
<keyword id="KW-0808">Transferase</keyword>
<accession>Q49X45</accession>
<protein>
    <recommendedName>
        <fullName evidence="1">Isoprenyl transferase</fullName>
        <ecNumber evidence="1">2.5.1.-</ecNumber>
    </recommendedName>
</protein>
<proteinExistence type="inferred from homology"/>
<sequence>MFKKLIKKNKNQPIQSEFGLDLHNIPEHVAIIMDGNGRWAKQRKLPRIKGHYQGMQTVKKITKVASDIGIKYLTLYAFSTENWTRPENEVNYIMNLPVNFLKTFLPELIENNVKVETIGFMEYLPSSTLKAIAKAKEDTKDNTGLKLIFAINYGGRAEILNSVKTIYDELTAKGLTSDDITEQMIDDHLMTHAYPDPDLLIRTSGEQRISNFLIWQVSYSEFIFNEKLWPDFDKEELINCIKIYQSRQRRFGGL</sequence>
<reference key="1">
    <citation type="journal article" date="2005" name="Proc. Natl. Acad. Sci. U.S.A.">
        <title>Whole genome sequence of Staphylococcus saprophyticus reveals the pathogenesis of uncomplicated urinary tract infection.</title>
        <authorList>
            <person name="Kuroda M."/>
            <person name="Yamashita A."/>
            <person name="Hirakawa H."/>
            <person name="Kumano M."/>
            <person name="Morikawa K."/>
            <person name="Higashide M."/>
            <person name="Maruyama A."/>
            <person name="Inose Y."/>
            <person name="Matoba K."/>
            <person name="Toh H."/>
            <person name="Kuhara S."/>
            <person name="Hattori M."/>
            <person name="Ohta T."/>
        </authorList>
    </citation>
    <scope>NUCLEOTIDE SEQUENCE [LARGE SCALE GENOMIC DNA]</scope>
    <source>
        <strain>ATCC 15305 / DSM 20229 / NCIMB 8711 / NCTC 7292 / S-41</strain>
    </source>
</reference>